<keyword id="KW-0028">Amino-acid biosynthesis</keyword>
<keyword id="KW-0963">Cytoplasm</keyword>
<keyword id="KW-0368">Histidine biosynthesis</keyword>
<keyword id="KW-0378">Hydrolase</keyword>
<keyword id="KW-0460">Magnesium</keyword>
<keyword id="KW-0479">Metal-binding</keyword>
<keyword id="KW-0862">Zinc</keyword>
<gene>
    <name evidence="1" type="primary">hisI</name>
    <name type="ordered locus">BR1076</name>
    <name type="ordered locus">BS1330_I1072</name>
</gene>
<comment type="function">
    <text evidence="1">Catalyzes the hydrolysis of the adenine ring of phosphoribosyl-AMP.</text>
</comment>
<comment type="catalytic activity">
    <reaction evidence="1">
        <text>1-(5-phospho-beta-D-ribosyl)-5'-AMP + H2O = 1-(5-phospho-beta-D-ribosyl)-5-[(5-phospho-beta-D-ribosylamino)methylideneamino]imidazole-4-carboxamide</text>
        <dbReference type="Rhea" id="RHEA:20049"/>
        <dbReference type="ChEBI" id="CHEBI:15377"/>
        <dbReference type="ChEBI" id="CHEBI:58435"/>
        <dbReference type="ChEBI" id="CHEBI:59457"/>
        <dbReference type="EC" id="3.5.4.19"/>
    </reaction>
</comment>
<comment type="cofactor">
    <cofactor evidence="1">
        <name>Mg(2+)</name>
        <dbReference type="ChEBI" id="CHEBI:18420"/>
    </cofactor>
    <text evidence="1">Binds 1 Mg(2+) ion per subunit.</text>
</comment>
<comment type="cofactor">
    <cofactor evidence="1">
        <name>Zn(2+)</name>
        <dbReference type="ChEBI" id="CHEBI:29105"/>
    </cofactor>
    <text evidence="1">Binds 1 zinc ion per subunit.</text>
</comment>
<comment type="pathway">
    <text evidence="1">Amino-acid biosynthesis; L-histidine biosynthesis; L-histidine from 5-phospho-alpha-D-ribose 1-diphosphate: step 3/9.</text>
</comment>
<comment type="subunit">
    <text evidence="1">Homodimer.</text>
</comment>
<comment type="subcellular location">
    <subcellularLocation>
        <location evidence="1">Cytoplasm</location>
    </subcellularLocation>
</comment>
<comment type="similarity">
    <text evidence="1">Belongs to the PRA-CH family.</text>
</comment>
<comment type="sequence caution" evidence="2">
    <conflict type="erroneous initiation">
        <sequence resource="EMBL-CDS" id="AAN29996"/>
    </conflict>
</comment>
<name>HIS3_BRUSU</name>
<accession>Q8G0L3</accession>
<accession>G0K9Z8</accession>
<reference key="1">
    <citation type="journal article" date="2002" name="Proc. Natl. Acad. Sci. U.S.A.">
        <title>The Brucella suis genome reveals fundamental similarities between animal and plant pathogens and symbionts.</title>
        <authorList>
            <person name="Paulsen I.T."/>
            <person name="Seshadri R."/>
            <person name="Nelson K.E."/>
            <person name="Eisen J.A."/>
            <person name="Heidelberg J.F."/>
            <person name="Read T.D."/>
            <person name="Dodson R.J."/>
            <person name="Umayam L.A."/>
            <person name="Brinkac L.M."/>
            <person name="Beanan M.J."/>
            <person name="Daugherty S.C."/>
            <person name="DeBoy R.T."/>
            <person name="Durkin A.S."/>
            <person name="Kolonay J.F."/>
            <person name="Madupu R."/>
            <person name="Nelson W.C."/>
            <person name="Ayodeji B."/>
            <person name="Kraul M."/>
            <person name="Shetty J."/>
            <person name="Malek J.A."/>
            <person name="Van Aken S.E."/>
            <person name="Riedmuller S."/>
            <person name="Tettelin H."/>
            <person name="Gill S.R."/>
            <person name="White O."/>
            <person name="Salzberg S.L."/>
            <person name="Hoover D.L."/>
            <person name="Lindler L.E."/>
            <person name="Halling S.M."/>
            <person name="Boyle S.M."/>
            <person name="Fraser C.M."/>
        </authorList>
    </citation>
    <scope>NUCLEOTIDE SEQUENCE [LARGE SCALE GENOMIC DNA]</scope>
    <source>
        <strain>1330</strain>
    </source>
</reference>
<reference key="2">
    <citation type="journal article" date="2011" name="J. Bacteriol.">
        <title>Revised genome sequence of Brucella suis 1330.</title>
        <authorList>
            <person name="Tae H."/>
            <person name="Shallom S."/>
            <person name="Settlage R."/>
            <person name="Preston D."/>
            <person name="Adams L.G."/>
            <person name="Garner H.R."/>
        </authorList>
    </citation>
    <scope>NUCLEOTIDE SEQUENCE [LARGE SCALE GENOMIC DNA]</scope>
    <source>
        <strain>1330</strain>
    </source>
</reference>
<feature type="chain" id="PRO_0000136467" description="Phosphoribosyl-AMP cyclohydrolase">
    <location>
        <begin position="1"/>
        <end position="139"/>
    </location>
</feature>
<feature type="binding site" evidence="1">
    <location>
        <position position="91"/>
    </location>
    <ligand>
        <name>Mg(2+)</name>
        <dbReference type="ChEBI" id="CHEBI:18420"/>
    </ligand>
</feature>
<feature type="binding site" evidence="1">
    <location>
        <position position="92"/>
    </location>
    <ligand>
        <name>Zn(2+)</name>
        <dbReference type="ChEBI" id="CHEBI:29105"/>
        <note>ligand shared between dimeric partners</note>
    </ligand>
</feature>
<feature type="binding site" evidence="1">
    <location>
        <position position="93"/>
    </location>
    <ligand>
        <name>Mg(2+)</name>
        <dbReference type="ChEBI" id="CHEBI:18420"/>
    </ligand>
</feature>
<feature type="binding site" evidence="1">
    <location>
        <position position="95"/>
    </location>
    <ligand>
        <name>Mg(2+)</name>
        <dbReference type="ChEBI" id="CHEBI:18420"/>
    </ligand>
</feature>
<feature type="binding site" evidence="1">
    <location>
        <position position="110"/>
    </location>
    <ligand>
        <name>Zn(2+)</name>
        <dbReference type="ChEBI" id="CHEBI:29105"/>
        <note>ligand shared between dimeric partners</note>
    </ligand>
</feature>
<feature type="binding site" evidence="1">
    <location>
        <position position="117"/>
    </location>
    <ligand>
        <name>Zn(2+)</name>
        <dbReference type="ChEBI" id="CHEBI:29105"/>
        <note>ligand shared between dimeric partners</note>
    </ligand>
</feature>
<dbReference type="EC" id="3.5.4.19" evidence="1"/>
<dbReference type="EMBL" id="AE014291">
    <property type="protein sequence ID" value="AAN29996.1"/>
    <property type="status" value="ALT_INIT"/>
    <property type="molecule type" value="Genomic_DNA"/>
</dbReference>
<dbReference type="EMBL" id="CP002997">
    <property type="protein sequence ID" value="AEM18414.1"/>
    <property type="molecule type" value="Genomic_DNA"/>
</dbReference>
<dbReference type="RefSeq" id="WP_004690855.1">
    <property type="nucleotide sequence ID" value="NZ_KN046804.1"/>
</dbReference>
<dbReference type="SMR" id="Q8G0L3"/>
<dbReference type="GeneID" id="55590764"/>
<dbReference type="KEGG" id="bms:BR1076"/>
<dbReference type="KEGG" id="bsi:BS1330_I1072"/>
<dbReference type="PATRIC" id="fig|204722.21.peg.3681"/>
<dbReference type="HOGENOM" id="CLU_048577_5_0_5"/>
<dbReference type="PhylomeDB" id="Q8G0L3"/>
<dbReference type="UniPathway" id="UPA00031">
    <property type="reaction ID" value="UER00008"/>
</dbReference>
<dbReference type="Proteomes" id="UP000007104">
    <property type="component" value="Chromosome I"/>
</dbReference>
<dbReference type="GO" id="GO:0005737">
    <property type="term" value="C:cytoplasm"/>
    <property type="evidence" value="ECO:0007669"/>
    <property type="project" value="UniProtKB-SubCell"/>
</dbReference>
<dbReference type="GO" id="GO:0000287">
    <property type="term" value="F:magnesium ion binding"/>
    <property type="evidence" value="ECO:0007669"/>
    <property type="project" value="UniProtKB-UniRule"/>
</dbReference>
<dbReference type="GO" id="GO:0004635">
    <property type="term" value="F:phosphoribosyl-AMP cyclohydrolase activity"/>
    <property type="evidence" value="ECO:0007669"/>
    <property type="project" value="UniProtKB-UniRule"/>
</dbReference>
<dbReference type="GO" id="GO:0008270">
    <property type="term" value="F:zinc ion binding"/>
    <property type="evidence" value="ECO:0007669"/>
    <property type="project" value="UniProtKB-UniRule"/>
</dbReference>
<dbReference type="GO" id="GO:0000105">
    <property type="term" value="P:L-histidine biosynthetic process"/>
    <property type="evidence" value="ECO:0007669"/>
    <property type="project" value="UniProtKB-UniRule"/>
</dbReference>
<dbReference type="FunFam" id="3.10.20.810:FF:000001">
    <property type="entry name" value="Histidine biosynthesis bifunctional protein HisIE"/>
    <property type="match status" value="1"/>
</dbReference>
<dbReference type="Gene3D" id="4.10.80.70">
    <property type="match status" value="1"/>
</dbReference>
<dbReference type="Gene3D" id="3.10.20.810">
    <property type="entry name" value="Phosphoribosyl-AMP cyclohydrolase"/>
    <property type="match status" value="1"/>
</dbReference>
<dbReference type="HAMAP" id="MF_01021">
    <property type="entry name" value="HisI"/>
    <property type="match status" value="1"/>
</dbReference>
<dbReference type="InterPro" id="IPR026660">
    <property type="entry name" value="PRA-CH"/>
</dbReference>
<dbReference type="InterPro" id="IPR002496">
    <property type="entry name" value="PRib_AMP_CycHydrolase_dom"/>
</dbReference>
<dbReference type="InterPro" id="IPR038019">
    <property type="entry name" value="PRib_AMP_CycHydrolase_sf"/>
</dbReference>
<dbReference type="NCBIfam" id="NF000768">
    <property type="entry name" value="PRK00051.1"/>
    <property type="match status" value="1"/>
</dbReference>
<dbReference type="PANTHER" id="PTHR42945">
    <property type="entry name" value="HISTIDINE BIOSYNTHESIS BIFUNCTIONAL PROTEIN"/>
    <property type="match status" value="1"/>
</dbReference>
<dbReference type="PANTHER" id="PTHR42945:SF1">
    <property type="entry name" value="HISTIDINE BIOSYNTHESIS BIFUNCTIONAL PROTEIN HIS7"/>
    <property type="match status" value="1"/>
</dbReference>
<dbReference type="Pfam" id="PF01502">
    <property type="entry name" value="PRA-CH"/>
    <property type="match status" value="1"/>
</dbReference>
<dbReference type="SUPFAM" id="SSF141734">
    <property type="entry name" value="HisI-like"/>
    <property type="match status" value="1"/>
</dbReference>
<protein>
    <recommendedName>
        <fullName evidence="1">Phosphoribosyl-AMP cyclohydrolase</fullName>
        <shortName evidence="1">PRA-CH</shortName>
        <ecNumber evidence="1">3.5.4.19</ecNumber>
    </recommendedName>
</protein>
<sequence length="139" mass="15308">MSIFPAQPSDKKAVEEGAAFMPRFDASGLITAIVTDARDGELLMVAHMNEEALRLTLETGIAHYWSRSRKTLWKKGETSGNLQSVVELRTDCDQDALWLKVHVAGDGPTCHTGRRSCFYRQVVSSGGKVALTMVSDHDQ</sequence>
<organism>
    <name type="scientific">Brucella suis biovar 1 (strain 1330)</name>
    <dbReference type="NCBI Taxonomy" id="204722"/>
    <lineage>
        <taxon>Bacteria</taxon>
        <taxon>Pseudomonadati</taxon>
        <taxon>Pseudomonadota</taxon>
        <taxon>Alphaproteobacteria</taxon>
        <taxon>Hyphomicrobiales</taxon>
        <taxon>Brucellaceae</taxon>
        <taxon>Brucella/Ochrobactrum group</taxon>
        <taxon>Brucella</taxon>
    </lineage>
</organism>
<evidence type="ECO:0000255" key="1">
    <source>
        <dbReference type="HAMAP-Rule" id="MF_01021"/>
    </source>
</evidence>
<evidence type="ECO:0000305" key="2"/>
<proteinExistence type="inferred from homology"/>